<proteinExistence type="evidence at protein level"/>
<dbReference type="SMR" id="P83397"/>
<dbReference type="GO" id="GO:0005576">
    <property type="term" value="C:extracellular region"/>
    <property type="evidence" value="ECO:0007669"/>
    <property type="project" value="UniProtKB-SubCell"/>
</dbReference>
<dbReference type="GO" id="GO:0004867">
    <property type="term" value="F:serine-type endopeptidase inhibitor activity"/>
    <property type="evidence" value="ECO:0007669"/>
    <property type="project" value="UniProtKB-KW"/>
</dbReference>
<dbReference type="CDD" id="cd00150">
    <property type="entry name" value="PlantTI"/>
    <property type="match status" value="1"/>
</dbReference>
<dbReference type="Gene3D" id="4.10.75.20">
    <property type="match status" value="1"/>
</dbReference>
<dbReference type="InterPro" id="IPR000737">
    <property type="entry name" value="Prot_inh_squash"/>
</dbReference>
<dbReference type="InterPro" id="IPR011052">
    <property type="entry name" value="Proteinase_amylase_inhib_sf"/>
</dbReference>
<dbReference type="Pfam" id="PF00299">
    <property type="entry name" value="Squash"/>
    <property type="match status" value="1"/>
</dbReference>
<dbReference type="PRINTS" id="PR00293">
    <property type="entry name" value="SQUASHINHBTR"/>
</dbReference>
<dbReference type="SMART" id="SM00286">
    <property type="entry name" value="PTI"/>
    <property type="match status" value="1"/>
</dbReference>
<dbReference type="SUPFAM" id="SSF57027">
    <property type="entry name" value="Plant inhibitors of proteinases and amylases"/>
    <property type="match status" value="1"/>
</dbReference>
<dbReference type="PROSITE" id="PS00286">
    <property type="entry name" value="SQUASH_INHIBITOR"/>
    <property type="match status" value="1"/>
</dbReference>
<comment type="function">
    <text evidence="3">Strongly inhibits trypsin, weakly inhibits chymotrypsin.</text>
</comment>
<comment type="subcellular location">
    <subcellularLocation>
        <location evidence="5">Secreted</location>
    </subcellularLocation>
</comment>
<comment type="domain">
    <text evidence="1">The presence of a 'disulfide through disulfide knot' structurally defines this protein as a knottin.</text>
</comment>
<comment type="similarity">
    <text evidence="2">Belongs to the protease inhibitor I7 (squash-type serine protease inhibitor) family.</text>
</comment>
<reference evidence="5" key="1">
    <citation type="journal article" date="2006" name="Biochim. Biophys. Acta">
        <title>Isolation and primary structures of seven serine proteinase inhibitors from Cyclanthera pedata seeds.</title>
        <authorList>
            <person name="Kowalska J."/>
            <person name="Zablocka A."/>
            <person name="Wilusz T."/>
        </authorList>
    </citation>
    <scope>PROTEIN SEQUENCE</scope>
    <scope>FUNCTION</scope>
    <scope>REACTIVE SITE</scope>
    <source>
        <tissue evidence="3">Seed</tissue>
    </source>
</reference>
<evidence type="ECO:0000250" key="1">
    <source>
        <dbReference type="UniProtKB" id="P01074"/>
    </source>
</evidence>
<evidence type="ECO:0000255" key="2"/>
<evidence type="ECO:0000269" key="3">
    <source>
    </source>
</evidence>
<evidence type="ECO:0000303" key="4">
    <source>
    </source>
</evidence>
<evidence type="ECO:0000305" key="5"/>
<feature type="peptide" id="PRO_0000044379" description="Trypsin inhibitor 6" evidence="3">
    <location>
        <begin position="1"/>
        <end position="30"/>
    </location>
</feature>
<feature type="site" description="Reactive bond" evidence="3">
    <location>
        <begin position="6"/>
        <end position="7"/>
    </location>
</feature>
<feature type="disulfide bond" evidence="1">
    <location>
        <begin position="4"/>
        <end position="21"/>
    </location>
</feature>
<feature type="disulfide bond" evidence="1">
    <location>
        <begin position="11"/>
        <end position="23"/>
    </location>
</feature>
<feature type="disulfide bond" evidence="1">
    <location>
        <begin position="17"/>
        <end position="29"/>
    </location>
</feature>
<organism>
    <name type="scientific">Cyclanthera pedata</name>
    <name type="common">Achocha</name>
    <name type="synonym">Caihua</name>
    <dbReference type="NCBI Taxonomy" id="198836"/>
    <lineage>
        <taxon>Eukaryota</taxon>
        <taxon>Viridiplantae</taxon>
        <taxon>Streptophyta</taxon>
        <taxon>Embryophyta</taxon>
        <taxon>Tracheophyta</taxon>
        <taxon>Spermatophyta</taxon>
        <taxon>Magnoliopsida</taxon>
        <taxon>eudicotyledons</taxon>
        <taxon>Gunneridae</taxon>
        <taxon>Pentapetalae</taxon>
        <taxon>rosids</taxon>
        <taxon>fabids</taxon>
        <taxon>Cucurbitales</taxon>
        <taxon>Cucurbitaceae</taxon>
        <taxon>Sicyoeae</taxon>
        <taxon>Cyclanthera</taxon>
    </lineage>
</organism>
<keyword id="KW-0903">Direct protein sequencing</keyword>
<keyword id="KW-1015">Disulfide bond</keyword>
<keyword id="KW-0960">Knottin</keyword>
<keyword id="KW-0646">Protease inhibitor</keyword>
<keyword id="KW-0964">Secreted</keyword>
<keyword id="KW-0722">Serine protease inhibitor</keyword>
<name>ITR6_CYCPE</name>
<protein>
    <recommendedName>
        <fullName evidence="4">Trypsin inhibitor 6</fullName>
    </recommendedName>
    <alternativeName>
        <fullName evidence="4">CyPTI-VI</fullName>
    </alternativeName>
    <alternativeName>
        <fullName evidence="4">Trypsin inhibitor VI</fullName>
    </alternativeName>
</protein>
<accession>P83397</accession>
<sequence>ARICPRILMKCKKDSDCLAECICEEHGFCG</sequence>